<proteinExistence type="evidence at protein level"/>
<evidence type="ECO:0000250" key="1"/>
<evidence type="ECO:0000305" key="2"/>
<name>ITR1_CITLA</name>
<reference key="1">
    <citation type="journal article" date="1987" name="Biol. Chem. Hoppe-Seyler">
        <title>Amino-acid sequences of trypsin inhibitors from watermelon (Citrullus vulgaris) and red bryony (Bryonia dioica) seeds.</title>
        <authorList>
            <person name="Otlewski J."/>
            <person name="Whatley H."/>
            <person name="Polanowski A."/>
            <person name="Wilusz T."/>
        </authorList>
    </citation>
    <scope>PROTEIN SEQUENCE</scope>
    <source>
        <tissue>Seed</tissue>
    </source>
</reference>
<accession>P11969</accession>
<dbReference type="PIR" id="S00176">
    <property type="entry name" value="TIPU1W"/>
</dbReference>
<dbReference type="SMR" id="P11969"/>
<dbReference type="MEROPS" id="I07.009"/>
<dbReference type="GO" id="GO:0005576">
    <property type="term" value="C:extracellular region"/>
    <property type="evidence" value="ECO:0007669"/>
    <property type="project" value="UniProtKB-SubCell"/>
</dbReference>
<dbReference type="GO" id="GO:0004867">
    <property type="term" value="F:serine-type endopeptidase inhibitor activity"/>
    <property type="evidence" value="ECO:0007669"/>
    <property type="project" value="UniProtKB-KW"/>
</dbReference>
<dbReference type="CDD" id="cd00150">
    <property type="entry name" value="PlantTI"/>
    <property type="match status" value="1"/>
</dbReference>
<dbReference type="Gene3D" id="4.10.75.20">
    <property type="match status" value="1"/>
</dbReference>
<dbReference type="InterPro" id="IPR000737">
    <property type="entry name" value="Prot_inh_squash"/>
</dbReference>
<dbReference type="InterPro" id="IPR011052">
    <property type="entry name" value="Proteinase_amylase_inhib_sf"/>
</dbReference>
<dbReference type="Pfam" id="PF00299">
    <property type="entry name" value="Squash"/>
    <property type="match status" value="1"/>
</dbReference>
<dbReference type="PRINTS" id="PR00293">
    <property type="entry name" value="SQUASHINHBTR"/>
</dbReference>
<dbReference type="SMART" id="SM00286">
    <property type="entry name" value="PTI"/>
    <property type="match status" value="1"/>
</dbReference>
<dbReference type="SUPFAM" id="SSF57027">
    <property type="entry name" value="Plant inhibitors of proteinases and amylases"/>
    <property type="match status" value="1"/>
</dbReference>
<dbReference type="PROSITE" id="PS00286">
    <property type="entry name" value="SQUASH_INHIBITOR"/>
    <property type="match status" value="1"/>
</dbReference>
<organism>
    <name type="scientific">Citrullus lanatus</name>
    <name type="common">Watermelon</name>
    <name type="synonym">Citrullus vulgaris</name>
    <dbReference type="NCBI Taxonomy" id="3654"/>
    <lineage>
        <taxon>Eukaryota</taxon>
        <taxon>Viridiplantae</taxon>
        <taxon>Streptophyta</taxon>
        <taxon>Embryophyta</taxon>
        <taxon>Tracheophyta</taxon>
        <taxon>Spermatophyta</taxon>
        <taxon>Magnoliopsida</taxon>
        <taxon>eudicotyledons</taxon>
        <taxon>Gunneridae</taxon>
        <taxon>Pentapetalae</taxon>
        <taxon>rosids</taxon>
        <taxon>fabids</taxon>
        <taxon>Cucurbitales</taxon>
        <taxon>Cucurbitaceae</taxon>
        <taxon>Benincaseae</taxon>
        <taxon>Citrullus</taxon>
    </lineage>
</organism>
<keyword id="KW-0903">Direct protein sequencing</keyword>
<keyword id="KW-1015">Disulfide bond</keyword>
<keyword id="KW-0960">Knottin</keyword>
<keyword id="KW-0646">Protease inhibitor</keyword>
<keyword id="KW-0964">Secreted</keyword>
<keyword id="KW-0722">Serine protease inhibitor</keyword>
<comment type="function">
    <text>Inhibits trypsin.</text>
</comment>
<comment type="subcellular location">
    <subcellularLocation>
        <location>Secreted</location>
    </subcellularLocation>
</comment>
<comment type="domain">
    <text evidence="1">The presence of a 'disulfide through disulfide knot' structurally defines this protein as a knottin.</text>
</comment>
<comment type="similarity">
    <text evidence="2">Belongs to the protease inhibitor I7 (squash-type serine protease inhibitor) family.</text>
</comment>
<protein>
    <recommendedName>
        <fullName>Trypsin inhibitor 1</fullName>
    </recommendedName>
    <alternativeName>
        <fullName>CVTI-I</fullName>
    </alternativeName>
    <alternativeName>
        <fullName>Trypsin inhibitor I</fullName>
    </alternativeName>
</protein>
<sequence length="30" mass="3386">GRRCPRIYMECKRDADCLADCVCLQHGICG</sequence>
<feature type="peptide" id="PRO_0000044375" description="Trypsin inhibitor 1">
    <location>
        <begin position="1"/>
        <end position="30"/>
    </location>
</feature>
<feature type="site" description="Reactive bond">
    <location>
        <begin position="6"/>
        <end position="7"/>
    </location>
</feature>
<feature type="disulfide bond" evidence="1">
    <location>
        <begin position="4"/>
        <end position="21"/>
    </location>
</feature>
<feature type="disulfide bond" evidence="1">
    <location>
        <begin position="11"/>
        <end position="23"/>
    </location>
</feature>
<feature type="disulfide bond" evidence="1">
    <location>
        <begin position="17"/>
        <end position="29"/>
    </location>
</feature>